<reference key="1">
    <citation type="journal article" date="1997" name="J. Biol. Chem.">
        <title>Expression cloning and characterization of ROAT1. The basolateral organic anion transporter in rat kidney.</title>
        <authorList>
            <person name="Sweet D.H."/>
            <person name="Wolff N.A."/>
            <person name="Pritchard J.B."/>
        </authorList>
    </citation>
    <scope>NUCLEOTIDE SEQUENCE [MRNA]</scope>
    <scope>FUNCTION</scope>
    <scope>TISSUE SPECIFICITY</scope>
    <scope>MISCELLANEOUS</scope>
    <source>
        <tissue>Kidney</tissue>
    </source>
</reference>
<reference key="2">
    <citation type="journal article" date="1997" name="J. Biol. Chem.">
        <title>Expression cloning and characterization of a novel multispecific organic anion transporter.</title>
        <authorList>
            <person name="Sekine T."/>
            <person name="Watanabe N."/>
            <person name="Hosoyamada M."/>
            <person name="Kanai Y."/>
            <person name="Endou H."/>
        </authorList>
    </citation>
    <scope>NUCLEOTIDE SEQUENCE [MRNA]</scope>
    <scope>FUNCTION</scope>
    <scope>TRANSPORTER ACTIVITY</scope>
    <scope>TISSUE SPECIFICITY</scope>
    <scope>MISCELLANEOUS</scope>
    <source>
        <strain>Sprague-Dawley</strain>
        <tissue>Kidney</tissue>
    </source>
</reference>
<reference key="3">
    <citation type="journal article" date="2004" name="Genome Res.">
        <title>The status, quality, and expansion of the NIH full-length cDNA project: the Mammalian Gene Collection (MGC).</title>
        <authorList>
            <consortium name="The MGC Project Team"/>
        </authorList>
    </citation>
    <scope>NUCLEOTIDE SEQUENCE [LARGE SCALE MRNA]</scope>
    <source>
        <tissue>Kidney</tissue>
    </source>
</reference>
<reference key="4">
    <citation type="journal article" date="1999" name="Mol. Pharmacol.">
        <title>The antiviral nucleotide analogs cidofovir and adefovir are novel substrates for human and rat renal organic anion transporter 1.</title>
        <authorList>
            <person name="Cihlar T."/>
            <person name="Lin D.C."/>
            <person name="Pritchard J.B."/>
            <person name="Fuller M.D."/>
            <person name="Mendel D.B."/>
            <person name="Sweet D.H."/>
        </authorList>
    </citation>
    <scope>MISCELLANEOUS</scope>
</reference>
<reference key="5">
    <citation type="journal article" date="2004" name="Kidney Int.">
        <title>Characterization of uremic toxin transport by organic anion transporters in the kidney.</title>
        <authorList>
            <person name="Deguchi T."/>
            <person name="Kusuhara H."/>
            <person name="Takadate A."/>
            <person name="Endou H."/>
            <person name="Otagiri M."/>
            <person name="Sugiyama Y."/>
        </authorList>
    </citation>
    <scope>FUNCTION</scope>
    <scope>TRANSPORTER ACTIVITY</scope>
    <scope>BIOPHYSICOCHEMICAL PROPERTIES</scope>
</reference>
<reference key="6">
    <citation type="journal article" date="2006" name="J. Am. Soc. Nephrol.">
        <title>Prostaglandin E2 inhibits its own renal transport by downregulation of organic anion transporters rOAT1 and rOAT3.</title>
        <authorList>
            <person name="Sauvant C."/>
            <person name="Holzinger H."/>
            <person name="Gekle M."/>
        </authorList>
    </citation>
    <scope>INDUCTION BY PGE2</scope>
</reference>
<reference key="7">
    <citation type="journal article" date="2007" name="Kidney Int.">
        <title>Downregulation of organic anion transporters in rat kidney under ischemia/reperfusion-induced acute renal failure.</title>
        <authorList>
            <person name="Matsuzaki T."/>
            <person name="Watanabe H."/>
            <person name="Yoshitome K."/>
            <person name="Morisaki T."/>
            <person name="Hamada A."/>
            <person name="Nonoguchi H."/>
            <person name="Kohda Y."/>
            <person name="Tomita K."/>
            <person name="Inui K."/>
            <person name="Saito H."/>
        </authorList>
    </citation>
    <scope>INDUCTION</scope>
</reference>
<reference key="8">
    <citation type="journal article" date="2013" name="Biosci. Biotechnol. Biochem.">
        <title>Transport of xanthurenic acid by rat/human organic anion transporters OAT1 and OAT3.</title>
        <authorList>
            <person name="Uwai Y."/>
            <person name="Honjo E."/>
        </authorList>
    </citation>
    <scope>FUNCTION</scope>
    <scope>TRANSPORTER ACTIVITY</scope>
    <scope>MISCELLANEOUS</scope>
</reference>
<proteinExistence type="evidence at protein level"/>
<keyword id="KW-0002">3D-structure</keyword>
<keyword id="KW-1003">Cell membrane</keyword>
<keyword id="KW-0325">Glycoprotein</keyword>
<keyword id="KW-0472">Membrane</keyword>
<keyword id="KW-1185">Reference proteome</keyword>
<keyword id="KW-0812">Transmembrane</keyword>
<keyword id="KW-1133">Transmembrane helix</keyword>
<comment type="function">
    <text evidence="1 6 9 10 11">Secondary active transporter that functions as a Na(+)-independent organic anion (OA)/dicarboxylate antiporter where the uptake of one molecule of OA into the cell is coupled with an efflux of one molecule of intracellular dicarboxylate such as alpha-ketoglutarate or glutarate (PubMed:14675047, PubMed:23832370, PubMed:9228014, PubMed:9374486). Mediates the uptake of OA across the basolateral side of proximal tubule epithelial cells, thereby contributing to the renal elimination of endogenous OA from the systemic circulation into the urine (By similarity). Function as a biopterin transporters involved in the uptake and the secretion of coenzymes tetrahydrobiopterin (BH4) dihydrobiopterin (BH2) and sepiapterin to urine, thereby determining baseline levels of blood biopterins (By similarity). Transports prostaglandin E2 (PGE2) and prostaglandin F2-alpha (PGF2-alpha) and may contribute to their renal excretion (PubMed:9228014). Also mediates the uptake of cyclic nucleotides such as cAMP and cGMP (PubMed:9228014). Involved in the transport of neuroactive tryptophan metabolites kynurenate (KYNA) and xanthurenate (XA) and may contribute to their secretion from the brain (PubMed:23832370). May transport glutamate (By similarity). Also involved in the disposition of uremic toxins and potentially toxic xenobiotics by the renal organic anion secretory pathway, helping reduce their undesired toxicological effects on the body (PubMed:14675047, PubMed:9228014). Uremic toxins include the indoxyl sulfate (IS), hippurate, indole acetate (IA), 3-carboxy-4- methyl-5-propyl-2-furanpropionate(CMPF) and urate (PubMed:14675047, PubMed:9228014). Xenobiotics include the mycotoxin ochratoxin (OTA) (By similarity). May also contribute to the transport of organic compounds in testes across the blood-testis-barrier (By similarity). May also work as a bidirectional OA/dicarboxylate exchanger (PubMed:9228014).</text>
</comment>
<comment type="catalytic activity">
    <reaction evidence="1">
        <text>(6R)-L-erythro-5,6,7,8-tetrahydrobiopterin(out) + a dicarboxylate(in) = (6R)-L-erythro-5,6,7,8-tetrahydrobiopterin(in) + a dicarboxylate(out)</text>
        <dbReference type="Rhea" id="RHEA:76071"/>
        <dbReference type="ChEBI" id="CHEBI:28965"/>
        <dbReference type="ChEBI" id="CHEBI:59560"/>
    </reaction>
</comment>
<comment type="catalytic activity">
    <reaction evidence="1">
        <text>L-erythro-7,8-dihydrobiopterin(out) + a dicarboxylate(in) = L-erythro-7,8-dihydrobiopterin(in) + a dicarboxylate(out)</text>
        <dbReference type="Rhea" id="RHEA:76075"/>
        <dbReference type="ChEBI" id="CHEBI:28965"/>
        <dbReference type="ChEBI" id="CHEBI:43029"/>
    </reaction>
</comment>
<comment type="catalytic activity">
    <reaction evidence="1">
        <text>L-sepiapterin(out) + a dicarboxylate(in) = L-sepiapterin(in) + a dicarboxylate(out)</text>
        <dbReference type="Rhea" id="RHEA:76079"/>
        <dbReference type="ChEBI" id="CHEBI:28965"/>
        <dbReference type="ChEBI" id="CHEBI:194527"/>
    </reaction>
</comment>
<comment type="catalytic activity">
    <reaction evidence="1">
        <text>prostaglandin F2alpha(out) + a dicarboxylate(in) = prostaglandin F2alpha(in) + a dicarboxylate(out)</text>
        <dbReference type="Rhea" id="RHEA:76119"/>
        <dbReference type="ChEBI" id="CHEBI:28965"/>
        <dbReference type="ChEBI" id="CHEBI:57404"/>
    </reaction>
</comment>
<comment type="catalytic activity">
    <reaction evidence="10">
        <text>prostaglandin E2(out) + a dicarboxylate(in) = prostaglandin E2(in) + a dicarboxylate(out)</text>
        <dbReference type="Rhea" id="RHEA:76123"/>
        <dbReference type="ChEBI" id="CHEBI:28965"/>
        <dbReference type="ChEBI" id="CHEBI:606564"/>
    </reaction>
</comment>
<comment type="catalytic activity">
    <reaction evidence="10">
        <text>3',5'-cyclic AMP(out) + a dicarboxylate(in) = 3',5'-cyclic AMP(in) + a dicarboxylate(out)</text>
        <dbReference type="Rhea" id="RHEA:76127"/>
        <dbReference type="ChEBI" id="CHEBI:28965"/>
        <dbReference type="ChEBI" id="CHEBI:58165"/>
    </reaction>
</comment>
<comment type="catalytic activity">
    <reaction evidence="10">
        <text>3',5'-cyclic GMP(out) + a dicarboxylate(in) = 3',5'-cyclic GMP(in) + a dicarboxylate(out)</text>
        <dbReference type="Rhea" id="RHEA:76131"/>
        <dbReference type="ChEBI" id="CHEBI:28965"/>
        <dbReference type="ChEBI" id="CHEBI:57746"/>
    </reaction>
</comment>
<comment type="catalytic activity">
    <reaction evidence="10">
        <text>urate(out) + a dicarboxylate(in) = urate(in) + a dicarboxylate(out)</text>
        <dbReference type="Rhea" id="RHEA:76135"/>
        <dbReference type="ChEBI" id="CHEBI:17775"/>
        <dbReference type="ChEBI" id="CHEBI:28965"/>
    </reaction>
</comment>
<comment type="catalytic activity">
    <reaction evidence="9">
        <text>kynurenate(out) + glutarate(in) = kynurenate(in) + glutarate(out)</text>
        <dbReference type="Rhea" id="RHEA:75999"/>
        <dbReference type="ChEBI" id="CHEBI:30921"/>
        <dbReference type="ChEBI" id="CHEBI:58454"/>
    </reaction>
</comment>
<comment type="catalytic activity">
    <reaction evidence="6">
        <text>(indol-3-yl)acetate(out) + a dicarboxylate(in) = (indol-3-yl)acetate(in) + a dicarboxylate(out)</text>
        <dbReference type="Rhea" id="RHEA:75983"/>
        <dbReference type="ChEBI" id="CHEBI:28965"/>
        <dbReference type="ChEBI" id="CHEBI:30854"/>
    </reaction>
</comment>
<comment type="catalytic activity">
    <reaction evidence="6">
        <text>indoxyl sulfate(out) + a dicarboxylate(in) = indoxyl sulfate(in) + a dicarboxylate(out)</text>
        <dbReference type="Rhea" id="RHEA:75987"/>
        <dbReference type="ChEBI" id="CHEBI:28965"/>
        <dbReference type="ChEBI" id="CHEBI:144643"/>
    </reaction>
</comment>
<comment type="catalytic activity">
    <reaction evidence="6">
        <text>N-benzoylglycine(out) + a dicarboxylate(in) = N-benzoylglycine(in) + a dicarboxylate(out)</text>
        <dbReference type="Rhea" id="RHEA:75991"/>
        <dbReference type="ChEBI" id="CHEBI:28965"/>
        <dbReference type="ChEBI" id="CHEBI:606565"/>
    </reaction>
</comment>
<comment type="catalytic activity">
    <reaction evidence="6">
        <text>3-carboxy-4-methyl-5-propyl-2-furanpropanoate(out) + a dicarboxylate(in) = 3-carboxy-4-methyl-5-propyl-2-furanpropanoate(in) + a dicarboxylate(out)</text>
        <dbReference type="Rhea" id="RHEA:75995"/>
        <dbReference type="ChEBI" id="CHEBI:28965"/>
        <dbReference type="ChEBI" id="CHEBI:194524"/>
    </reaction>
</comment>
<comment type="biophysicochemical properties">
    <kinetics>
        <KM evidence="6">27.5 uM for hippurate/N-benzoylglycine</KM>
        <KM evidence="6">47.1 uM for indole acetate</KM>
        <KM evidence="6">17.7 uM for indoxyl sulfate</KM>
        <KM evidence="6">154 uM for 3-carboxy-4- methyl-5-propyl-2-furanpropionate</KM>
        <Vmax evidence="6">519.0 pmol/min/mg enzyme for hippurate/N-benzoylglycine uptake</Vmax>
        <Vmax evidence="6">387.0 pmol/min/mg enzyme for indole acetate uptake</Vmax>
        <Vmax evidence="6">350.0 pmol/min/mg enzyme for indoxyl sulfate uptake</Vmax>
        <Vmax evidence="6">1669.0 pmol/min/mg enzyme for 3-carboxy-4- methyl-5-propyl-2-furanpropionate uptake</Vmax>
    </kinetics>
</comment>
<comment type="subcellular location">
    <subcellularLocation>
        <location evidence="2">Cell membrane</location>
        <topology evidence="2">Multi-pass membrane protein</topology>
    </subcellularLocation>
    <subcellularLocation>
        <location evidence="1">Basolateral cell membrane</location>
        <topology evidence="13">Multi-pass membrane protein</topology>
    </subcellularLocation>
    <subcellularLocation>
        <location evidence="1">Basal cell membrane</location>
        <topology evidence="13">Multi-pass membrane protein</topology>
    </subcellularLocation>
</comment>
<comment type="tissue specificity">
    <text evidence="10 11">Highly expressed in kidney; in the particular segment of the proximal tubule (PubMed:9228014, PubMed:9374486). In kidney, found preferentially in the cortex and outer medulla and weakly in the inner medulla (PubMed:9228014). Expressed to a lower extent in brain (PubMed:9228014).</text>
</comment>
<comment type="induction">
    <text evidence="7 8">Down-regulated by PGE2 and in ischemic kidney.</text>
</comment>
<comment type="domain">
    <text evidence="2">Multiple cysteine residues are necessary for proper targeting to the plasma membrane.</text>
</comment>
<comment type="PTM">
    <text evidence="1">Glycosylated. Glycosylation is necessary for proper targeting of the transporter to the plasma membrane.</text>
</comment>
<comment type="miscellaneous">
    <text evidence="1 5 9 10 11">Involved in the renal transport of a variety of drugs with well-known nephrotoxic potential, therefore may play a role in the etiology of the drug-associated nephrotoxicity (PubMed:10462545). Uptakes the diagnostic agent PAH/para-aminohippurate and clinically used drugs (PubMed:10462545, PubMed:23832370, PubMed:9228014, PubMed:9374486). Mediates the bidirectional transport of PAH/para-aminohippurate (By similarity).</text>
</comment>
<comment type="similarity">
    <text evidence="13">Belongs to the major facilitator (TC 2.A.1) superfamily. Organic cation transporter (TC 2.A.1.19) family.</text>
</comment>
<evidence type="ECO:0000250" key="1">
    <source>
        <dbReference type="UniProtKB" id="Q4U2R8"/>
    </source>
</evidence>
<evidence type="ECO:0000250" key="2">
    <source>
        <dbReference type="UniProtKB" id="Q8VC69"/>
    </source>
</evidence>
<evidence type="ECO:0000255" key="3"/>
<evidence type="ECO:0000256" key="4">
    <source>
        <dbReference type="SAM" id="MobiDB-lite"/>
    </source>
</evidence>
<evidence type="ECO:0000269" key="5">
    <source>
    </source>
</evidence>
<evidence type="ECO:0000269" key="6">
    <source>
    </source>
</evidence>
<evidence type="ECO:0000269" key="7">
    <source>
    </source>
</evidence>
<evidence type="ECO:0000269" key="8">
    <source>
    </source>
</evidence>
<evidence type="ECO:0000269" key="9">
    <source>
    </source>
</evidence>
<evidence type="ECO:0000269" key="10">
    <source>
    </source>
</evidence>
<evidence type="ECO:0000269" key="11">
    <source>
    </source>
</evidence>
<evidence type="ECO:0000303" key="12">
    <source>
    </source>
</evidence>
<evidence type="ECO:0000305" key="13"/>
<evidence type="ECO:0000312" key="14">
    <source>
        <dbReference type="RGD" id="69338"/>
    </source>
</evidence>
<evidence type="ECO:0007829" key="15">
    <source>
        <dbReference type="PDB" id="8OMU"/>
    </source>
</evidence>
<evidence type="ECO:0007829" key="16">
    <source>
        <dbReference type="PDB" id="8SDU"/>
    </source>
</evidence>
<evidence type="ECO:0007829" key="17">
    <source>
        <dbReference type="PDB" id="8SDY"/>
    </source>
</evidence>
<feature type="chain" id="PRO_0000324171" description="Solute carrier family 22 member 6">
    <location>
        <begin position="1"/>
        <end position="551"/>
    </location>
</feature>
<feature type="topological domain" description="Cytoplasmic" evidence="3">
    <location>
        <begin position="1"/>
        <end position="9"/>
    </location>
</feature>
<feature type="transmembrane region" description="Helical" evidence="3">
    <location>
        <begin position="10"/>
        <end position="30"/>
    </location>
</feature>
<feature type="topological domain" description="Extracellular" evidence="3">
    <location>
        <begin position="31"/>
        <end position="135"/>
    </location>
</feature>
<feature type="transmembrane region" description="Helical" evidence="3">
    <location>
        <begin position="136"/>
        <end position="156"/>
    </location>
</feature>
<feature type="topological domain" description="Cytoplasmic" evidence="3">
    <location>
        <begin position="157"/>
        <end position="164"/>
    </location>
</feature>
<feature type="transmembrane region" description="Helical" evidence="3">
    <location>
        <begin position="165"/>
        <end position="187"/>
    </location>
</feature>
<feature type="topological domain" description="Extracellular" evidence="3">
    <location>
        <begin position="188"/>
        <end position="195"/>
    </location>
</feature>
<feature type="transmembrane region" description="Helical" evidence="3">
    <location>
        <begin position="196"/>
        <end position="216"/>
    </location>
</feature>
<feature type="topological domain" description="Cytoplasmic" evidence="3">
    <location>
        <begin position="217"/>
        <end position="224"/>
    </location>
</feature>
<feature type="transmembrane region" description="Helical" evidence="3">
    <location>
        <begin position="225"/>
        <end position="245"/>
    </location>
</feature>
<feature type="topological domain" description="Extracellular" evidence="3">
    <location>
        <begin position="246"/>
        <end position="248"/>
    </location>
</feature>
<feature type="transmembrane region" description="Helical" evidence="3">
    <location>
        <begin position="249"/>
        <end position="269"/>
    </location>
</feature>
<feature type="topological domain" description="Cytoplasmic" evidence="3">
    <location>
        <begin position="270"/>
        <end position="337"/>
    </location>
</feature>
<feature type="transmembrane region" description="Helical" evidence="3">
    <location>
        <begin position="338"/>
        <end position="358"/>
    </location>
</feature>
<feature type="topological domain" description="Extracellular" evidence="3">
    <location>
        <begin position="359"/>
        <end position="368"/>
    </location>
</feature>
<feature type="transmembrane region" description="Helical" evidence="3">
    <location>
        <begin position="369"/>
        <end position="389"/>
    </location>
</feature>
<feature type="topological domain" description="Cytoplasmic" evidence="3">
    <location>
        <begin position="390"/>
        <end position="395"/>
    </location>
</feature>
<feature type="transmembrane region" description="Helical" evidence="3">
    <location>
        <begin position="396"/>
        <end position="416"/>
    </location>
</feature>
<feature type="topological domain" description="Extracellular" evidence="3">
    <location>
        <begin position="417"/>
        <end position="425"/>
    </location>
</feature>
<feature type="transmembrane region" description="Helical" evidence="3">
    <location>
        <begin position="426"/>
        <end position="446"/>
    </location>
</feature>
<feature type="topological domain" description="Cytoplasmic" evidence="3">
    <location>
        <begin position="447"/>
        <end position="484"/>
    </location>
</feature>
<feature type="transmembrane region" description="Helical" evidence="3">
    <location>
        <begin position="485"/>
        <end position="505"/>
    </location>
</feature>
<feature type="topological domain" description="Extracellular" evidence="3">
    <location>
        <begin position="506"/>
        <end position="551"/>
    </location>
</feature>
<feature type="region of interest" description="Disordered" evidence="4">
    <location>
        <begin position="514"/>
        <end position="551"/>
    </location>
</feature>
<feature type="compositionally biased region" description="Low complexity" evidence="4">
    <location>
        <begin position="526"/>
        <end position="537"/>
    </location>
</feature>
<feature type="compositionally biased region" description="Polar residues" evidence="4">
    <location>
        <begin position="542"/>
        <end position="551"/>
    </location>
</feature>
<feature type="glycosylation site" description="N-linked (GlcNAc...) asparagine" evidence="3">
    <location>
        <position position="39"/>
    </location>
</feature>
<feature type="glycosylation site" description="N-linked (GlcNAc...) asparagine" evidence="3">
    <location>
        <position position="56"/>
    </location>
</feature>
<feature type="glycosylation site" description="N-linked (GlcNAc...) asparagine" evidence="3">
    <location>
        <position position="92"/>
    </location>
</feature>
<feature type="glycosylation site" description="N-linked (GlcNAc...) asparagine" evidence="3">
    <location>
        <position position="113"/>
    </location>
</feature>
<feature type="helix" evidence="16">
    <location>
        <begin position="3"/>
        <end position="9"/>
    </location>
</feature>
<feature type="strand" evidence="15">
    <location>
        <begin position="12"/>
        <end position="14"/>
    </location>
</feature>
<feature type="helix" evidence="16">
    <location>
        <begin position="15"/>
        <end position="25"/>
    </location>
</feature>
<feature type="helix" evidence="16">
    <location>
        <begin position="28"/>
        <end position="35"/>
    </location>
</feature>
<feature type="helix" evidence="16">
    <location>
        <begin position="38"/>
        <end position="41"/>
    </location>
</feature>
<feature type="strand" evidence="16">
    <location>
        <begin position="47"/>
        <end position="49"/>
    </location>
</feature>
<feature type="strand" evidence="16">
    <location>
        <begin position="53"/>
        <end position="55"/>
    </location>
</feature>
<feature type="helix" evidence="15">
    <location>
        <begin position="57"/>
        <end position="60"/>
    </location>
</feature>
<feature type="turn" evidence="16">
    <location>
        <begin position="64"/>
        <end position="66"/>
    </location>
</feature>
<feature type="strand" evidence="16">
    <location>
        <begin position="73"/>
        <end position="75"/>
    </location>
</feature>
<feature type="strand" evidence="16">
    <location>
        <begin position="80"/>
        <end position="83"/>
    </location>
</feature>
<feature type="strand" evidence="16">
    <location>
        <begin position="109"/>
        <end position="111"/>
    </location>
</feature>
<feature type="turn" evidence="17">
    <location>
        <begin position="113"/>
        <end position="115"/>
    </location>
</feature>
<feature type="helix" evidence="16">
    <location>
        <begin position="120"/>
        <end position="124"/>
    </location>
</feature>
<feature type="helix" evidence="16">
    <location>
        <begin position="128"/>
        <end position="131"/>
    </location>
</feature>
<feature type="helix" evidence="16">
    <location>
        <begin position="132"/>
        <end position="159"/>
    </location>
</feature>
<feature type="helix" evidence="16">
    <location>
        <begin position="161"/>
        <end position="180"/>
    </location>
</feature>
<feature type="helix" evidence="16">
    <location>
        <begin position="185"/>
        <end position="212"/>
    </location>
</feature>
<feature type="helix" evidence="16">
    <location>
        <begin position="216"/>
        <end position="218"/>
    </location>
</feature>
<feature type="helix" evidence="16">
    <location>
        <begin position="219"/>
        <end position="243"/>
    </location>
</feature>
<feature type="helix" evidence="16">
    <location>
        <begin position="247"/>
        <end position="255"/>
    </location>
</feature>
<feature type="helix" evidence="16">
    <location>
        <begin position="257"/>
        <end position="265"/>
    </location>
</feature>
<feature type="helix" evidence="16">
    <location>
        <begin position="272"/>
        <end position="277"/>
    </location>
</feature>
<feature type="helix" evidence="16">
    <location>
        <begin position="281"/>
        <end position="295"/>
    </location>
</feature>
<feature type="helix" evidence="16">
    <location>
        <begin position="298"/>
        <end position="302"/>
    </location>
</feature>
<feature type="helix" evidence="16">
    <location>
        <begin position="306"/>
        <end position="312"/>
    </location>
</feature>
<feature type="turn" evidence="16">
    <location>
        <begin position="313"/>
        <end position="316"/>
    </location>
</feature>
<feature type="helix" evidence="16">
    <location>
        <begin position="328"/>
        <end position="331"/>
    </location>
</feature>
<feature type="helix" evidence="16">
    <location>
        <begin position="333"/>
        <end position="357"/>
    </location>
</feature>
<feature type="helix" evidence="16">
    <location>
        <begin position="360"/>
        <end position="363"/>
    </location>
</feature>
<feature type="helix" evidence="16">
    <location>
        <begin position="367"/>
        <end position="391"/>
    </location>
</feature>
<feature type="helix" evidence="16">
    <location>
        <begin position="394"/>
        <end position="414"/>
    </location>
</feature>
<feature type="helix" evidence="16">
    <location>
        <begin position="420"/>
        <end position="448"/>
    </location>
</feature>
<feature type="turn" evidence="16">
    <location>
        <begin position="451"/>
        <end position="453"/>
    </location>
</feature>
<feature type="helix" evidence="16">
    <location>
        <begin position="454"/>
        <end position="476"/>
    </location>
</feature>
<feature type="helix" evidence="16">
    <location>
        <begin position="477"/>
        <end position="480"/>
    </location>
</feature>
<feature type="helix" evidence="16">
    <location>
        <begin position="485"/>
        <end position="500"/>
    </location>
</feature>
<feature type="helix" evidence="16">
    <location>
        <begin position="501"/>
        <end position="503"/>
    </location>
</feature>
<feature type="helix" evidence="16">
    <location>
        <begin position="516"/>
        <end position="523"/>
    </location>
</feature>
<protein>
    <recommendedName>
        <fullName evidence="1">Solute carrier family 22 member 6</fullName>
    </recommendedName>
    <alternativeName>
        <fullName evidence="12">Organic anion transporter 1</fullName>
        <shortName evidence="12">rOAT1</shortName>
    </alternativeName>
    <alternativeName>
        <fullName evidence="12">renal organic anion transporter 1</fullName>
        <shortName>rROAT1</shortName>
    </alternativeName>
</protein>
<accession>O35956</accession>
<name>S22A6_RAT</name>
<gene>
    <name evidence="14" type="primary">Slc22a6</name>
    <name type="synonym">Oat1</name>
</gene>
<organism>
    <name type="scientific">Rattus norvegicus</name>
    <name type="common">Rat</name>
    <dbReference type="NCBI Taxonomy" id="10116"/>
    <lineage>
        <taxon>Eukaryota</taxon>
        <taxon>Metazoa</taxon>
        <taxon>Chordata</taxon>
        <taxon>Craniata</taxon>
        <taxon>Vertebrata</taxon>
        <taxon>Euteleostomi</taxon>
        <taxon>Mammalia</taxon>
        <taxon>Eutheria</taxon>
        <taxon>Euarchontoglires</taxon>
        <taxon>Glires</taxon>
        <taxon>Rodentia</taxon>
        <taxon>Myomorpha</taxon>
        <taxon>Muroidea</taxon>
        <taxon>Muridae</taxon>
        <taxon>Murinae</taxon>
        <taxon>Rattus</taxon>
    </lineage>
</organism>
<dbReference type="EMBL" id="AF008221">
    <property type="protein sequence ID" value="AAC18772.1"/>
    <property type="molecule type" value="mRNA"/>
</dbReference>
<dbReference type="EMBL" id="AB004559">
    <property type="protein sequence ID" value="BAA22086.1"/>
    <property type="molecule type" value="mRNA"/>
</dbReference>
<dbReference type="EMBL" id="BC104692">
    <property type="protein sequence ID" value="AAI04693.1"/>
    <property type="molecule type" value="mRNA"/>
</dbReference>
<dbReference type="RefSeq" id="NP_058920.1">
    <property type="nucleotide sequence ID" value="NM_017224.2"/>
</dbReference>
<dbReference type="PDB" id="8BVR">
    <property type="method" value="EM"/>
    <property type="resolution" value="3.52 A"/>
    <property type="chains" value="A=1-542"/>
</dbReference>
<dbReference type="PDB" id="8BVS">
    <property type="method" value="EM"/>
    <property type="resolution" value="3.61 A"/>
    <property type="chains" value="A=1-542"/>
</dbReference>
<dbReference type="PDB" id="8BVT">
    <property type="method" value="EM"/>
    <property type="resolution" value="3.94 A"/>
    <property type="chains" value="A=1-541"/>
</dbReference>
<dbReference type="PDB" id="8BW7">
    <property type="method" value="EM"/>
    <property type="resolution" value="3.53 A"/>
    <property type="chains" value="A=1-542"/>
</dbReference>
<dbReference type="PDB" id="8OMU">
    <property type="method" value="EM"/>
    <property type="resolution" value="3.43 A"/>
    <property type="chains" value="A=1-541"/>
</dbReference>
<dbReference type="PDB" id="8SDU">
    <property type="method" value="EM"/>
    <property type="resolution" value="2.05 A"/>
    <property type="chains" value="A=1-551"/>
</dbReference>
<dbReference type="PDB" id="8SDY">
    <property type="method" value="EM"/>
    <property type="resolution" value="2.79 A"/>
    <property type="chains" value="A=1-551"/>
</dbReference>
<dbReference type="PDB" id="8SDZ">
    <property type="method" value="EM"/>
    <property type="resolution" value="2.86 A"/>
    <property type="chains" value="A=1-551"/>
</dbReference>
<dbReference type="PDBsum" id="8BVR"/>
<dbReference type="PDBsum" id="8BVS"/>
<dbReference type="PDBsum" id="8BVT"/>
<dbReference type="PDBsum" id="8BW7"/>
<dbReference type="PDBsum" id="8OMU"/>
<dbReference type="PDBsum" id="8SDU"/>
<dbReference type="PDBsum" id="8SDY"/>
<dbReference type="PDBsum" id="8SDZ"/>
<dbReference type="EMDB" id="EMD-16269"/>
<dbReference type="EMDB" id="EMD-16270"/>
<dbReference type="EMDB" id="EMD-16271"/>
<dbReference type="EMDB" id="EMD-16280"/>
<dbReference type="EMDB" id="EMD-16977"/>
<dbReference type="EMDB" id="EMD-40352"/>
<dbReference type="EMDB" id="EMD-40354"/>
<dbReference type="EMDB" id="EMD-40355"/>
<dbReference type="SMR" id="O35956"/>
<dbReference type="BioGRID" id="248147">
    <property type="interactions" value="1"/>
</dbReference>
<dbReference type="FunCoup" id="O35956">
    <property type="interactions" value="5"/>
</dbReference>
<dbReference type="IntAct" id="O35956">
    <property type="interactions" value="1"/>
</dbReference>
<dbReference type="STRING" id="10116.ENSRNOP00000024756"/>
<dbReference type="BindingDB" id="O35956"/>
<dbReference type="ChEMBL" id="CHEMBL1777665"/>
<dbReference type="DrugCentral" id="O35956"/>
<dbReference type="TCDB" id="2.A.1.19.4">
    <property type="family name" value="the major facilitator superfamily (mfs)"/>
</dbReference>
<dbReference type="GlyCosmos" id="O35956">
    <property type="glycosylation" value="4 sites, No reported glycans"/>
</dbReference>
<dbReference type="GlyGen" id="O35956">
    <property type="glycosylation" value="4 sites"/>
</dbReference>
<dbReference type="PhosphoSitePlus" id="O35956"/>
<dbReference type="PaxDb" id="10116-ENSRNOP00000024756"/>
<dbReference type="Ensembl" id="ENSRNOT00000024757.5">
    <property type="protein sequence ID" value="ENSRNOP00000024756.2"/>
    <property type="gene ID" value="ENSRNOG00000018215.7"/>
</dbReference>
<dbReference type="GeneID" id="29509"/>
<dbReference type="KEGG" id="rno:29509"/>
<dbReference type="UCSC" id="RGD:69338">
    <property type="organism name" value="rat"/>
</dbReference>
<dbReference type="AGR" id="RGD:69338"/>
<dbReference type="CTD" id="9356"/>
<dbReference type="RGD" id="69338">
    <property type="gene designation" value="Slc22a6"/>
</dbReference>
<dbReference type="eggNOG" id="KOG0255">
    <property type="taxonomic scope" value="Eukaryota"/>
</dbReference>
<dbReference type="GeneTree" id="ENSGT00940000157004"/>
<dbReference type="HOGENOM" id="CLU_001265_33_3_1"/>
<dbReference type="InParanoid" id="O35956"/>
<dbReference type="OMA" id="WHCTGAS"/>
<dbReference type="OrthoDB" id="2544694at2759"/>
<dbReference type="PhylomeDB" id="O35956"/>
<dbReference type="TreeFam" id="TF315847"/>
<dbReference type="Reactome" id="R-RNO-561048">
    <property type="pathway name" value="Organic anion transport"/>
</dbReference>
<dbReference type="SABIO-RK" id="O35956"/>
<dbReference type="PRO" id="PR:O35956"/>
<dbReference type="Proteomes" id="UP000002494">
    <property type="component" value="Chromosome 1"/>
</dbReference>
<dbReference type="Bgee" id="ENSRNOG00000018215">
    <property type="expression patterns" value="Expressed in adult mammalian kidney and 12 other cell types or tissues"/>
</dbReference>
<dbReference type="GO" id="GO:0009925">
    <property type="term" value="C:basal plasma membrane"/>
    <property type="evidence" value="ECO:0000250"/>
    <property type="project" value="UniProtKB"/>
</dbReference>
<dbReference type="GO" id="GO:0016323">
    <property type="term" value="C:basolateral plasma membrane"/>
    <property type="evidence" value="ECO:0000250"/>
    <property type="project" value="UniProtKB"/>
</dbReference>
<dbReference type="GO" id="GO:0005901">
    <property type="term" value="C:caveola"/>
    <property type="evidence" value="ECO:0000314"/>
    <property type="project" value="RGD"/>
</dbReference>
<dbReference type="GO" id="GO:0005886">
    <property type="term" value="C:plasma membrane"/>
    <property type="evidence" value="ECO:0000250"/>
    <property type="project" value="UniProtKB"/>
</dbReference>
<dbReference type="GO" id="GO:0032991">
    <property type="term" value="C:protein-containing complex"/>
    <property type="evidence" value="ECO:0000314"/>
    <property type="project" value="RGD"/>
</dbReference>
<dbReference type="GO" id="GO:0015139">
    <property type="term" value="F:alpha-ketoglutarate transmembrane transporter activity"/>
    <property type="evidence" value="ECO:0000250"/>
    <property type="project" value="UniProtKB"/>
</dbReference>
<dbReference type="GO" id="GO:0015297">
    <property type="term" value="F:antiporter activity"/>
    <property type="evidence" value="ECO:0000314"/>
    <property type="project" value="UniProtKB"/>
</dbReference>
<dbReference type="GO" id="GO:0031404">
    <property type="term" value="F:chloride ion binding"/>
    <property type="evidence" value="ECO:0000314"/>
    <property type="project" value="RGD"/>
</dbReference>
<dbReference type="GO" id="GO:0042802">
    <property type="term" value="F:identical protein binding"/>
    <property type="evidence" value="ECO:0000353"/>
    <property type="project" value="RGD"/>
</dbReference>
<dbReference type="GO" id="GO:0008514">
    <property type="term" value="F:organic anion transmembrane transporter activity"/>
    <property type="evidence" value="ECO:0000314"/>
    <property type="project" value="UniProtKB"/>
</dbReference>
<dbReference type="GO" id="GO:0015132">
    <property type="term" value="F:prostaglandin transmembrane transporter activity"/>
    <property type="evidence" value="ECO:0000314"/>
    <property type="project" value="UniProtKB"/>
</dbReference>
<dbReference type="GO" id="GO:0015347">
    <property type="term" value="F:sodium-independent organic anion transmembrane transporter activity"/>
    <property type="evidence" value="ECO:0000314"/>
    <property type="project" value="RGD"/>
</dbReference>
<dbReference type="GO" id="GO:0005452">
    <property type="term" value="F:solute:inorganic anion antiporter activity"/>
    <property type="evidence" value="ECO:0000250"/>
    <property type="project" value="UniProtKB"/>
</dbReference>
<dbReference type="GO" id="GO:0022857">
    <property type="term" value="F:transmembrane transporter activity"/>
    <property type="evidence" value="ECO:0000266"/>
    <property type="project" value="RGD"/>
</dbReference>
<dbReference type="GO" id="GO:0042910">
    <property type="term" value="F:xenobiotic transmembrane transporter activity"/>
    <property type="evidence" value="ECO:0000250"/>
    <property type="project" value="UniProtKB"/>
</dbReference>
<dbReference type="GO" id="GO:0015742">
    <property type="term" value="P:alpha-ketoglutarate transport"/>
    <property type="evidence" value="ECO:0000250"/>
    <property type="project" value="UniProtKB"/>
</dbReference>
<dbReference type="GO" id="GO:0072237">
    <property type="term" value="P:metanephric proximal tubule development"/>
    <property type="evidence" value="ECO:0000270"/>
    <property type="project" value="RGD"/>
</dbReference>
<dbReference type="GO" id="GO:0006820">
    <property type="term" value="P:monoatomic anion transport"/>
    <property type="evidence" value="ECO:0000266"/>
    <property type="project" value="RGD"/>
</dbReference>
<dbReference type="GO" id="GO:0015711">
    <property type="term" value="P:organic anion transport"/>
    <property type="evidence" value="ECO:0000314"/>
    <property type="project" value="MGI"/>
</dbReference>
<dbReference type="GO" id="GO:0015732">
    <property type="term" value="P:prostaglandin transport"/>
    <property type="evidence" value="ECO:0000314"/>
    <property type="project" value="UniProtKB"/>
</dbReference>
<dbReference type="GO" id="GO:0097254">
    <property type="term" value="P:renal tubular secretion"/>
    <property type="evidence" value="ECO:0000250"/>
    <property type="project" value="UniProtKB"/>
</dbReference>
<dbReference type="GO" id="GO:0043252">
    <property type="term" value="P:sodium-independent organic anion transport"/>
    <property type="evidence" value="ECO:0000314"/>
    <property type="project" value="RGD"/>
</dbReference>
<dbReference type="FunFam" id="1.20.1250.20:FF:000023">
    <property type="entry name" value="Solute carrier family 22 member 6"/>
    <property type="match status" value="1"/>
</dbReference>
<dbReference type="Gene3D" id="1.20.1250.20">
    <property type="entry name" value="MFS general substrate transporter like domains"/>
    <property type="match status" value="1"/>
</dbReference>
<dbReference type="InterPro" id="IPR020846">
    <property type="entry name" value="MFS_dom"/>
</dbReference>
<dbReference type="InterPro" id="IPR005828">
    <property type="entry name" value="MFS_sugar_transport-like"/>
</dbReference>
<dbReference type="InterPro" id="IPR036259">
    <property type="entry name" value="MFS_trans_sf"/>
</dbReference>
<dbReference type="InterPro" id="IPR004749">
    <property type="entry name" value="Orgcat_transp/SVOP"/>
</dbReference>
<dbReference type="NCBIfam" id="TIGR00898">
    <property type="entry name" value="2A0119"/>
    <property type="match status" value="1"/>
</dbReference>
<dbReference type="PANTHER" id="PTHR24064">
    <property type="entry name" value="SOLUTE CARRIER FAMILY 22 MEMBER"/>
    <property type="match status" value="1"/>
</dbReference>
<dbReference type="Pfam" id="PF00083">
    <property type="entry name" value="Sugar_tr"/>
    <property type="match status" value="1"/>
</dbReference>
<dbReference type="SUPFAM" id="SSF103473">
    <property type="entry name" value="MFS general substrate transporter"/>
    <property type="match status" value="1"/>
</dbReference>
<dbReference type="PROSITE" id="PS50850">
    <property type="entry name" value="MFS"/>
    <property type="match status" value="1"/>
</dbReference>
<sequence>MAFNDLLKQVGGVGRFQLIQVTMVVAPLLLMASHNTLQNFTAAIPPHHCRPPANANLSKDGGLEAWLPLDKQGQPESCLRFTSPQWGPPFYNGTEANGTRVTEPCIDGWVYDNSTFPSTIVTEWNLVCSHRAFRQLAQSLYMVGVLLGAMVFGYLADRLGRRKVLILNYLQTAVSGTCAAYAPNYTVYCVFRLLSGMSLASIAINCMTLNVEWMPIHTRAYVGTLIGYVYSLGQFLLAGIAYAVPHWRHLQLVVSVPFFIAFIYSWFFIESARWYSSSGRLDLTLRALQRVARINGKQEEGAKLSIEVLRTSLQKELTLSKGQASAMELLRCPTLRHLFLCLSMLWFATSFAYYGLVMDLQGFGVSMYLIQVIFGAVDLPAKFVCFLVINSMGRRPAQMASLLLAGICILVNGIIPKSHTIIRTSLAVLGKGCLASSFNCIFLYTGELYPTVIRQTGLGMGSTMARVGSIVSPLVSMTAEFYPSMPLFIFGAVPVVASAVTALLPETLGQPLPDTVQDLKSRSRGKQNQQQQEQQKQMMPLQASTQEKNGL</sequence>